<proteinExistence type="inferred from homology"/>
<comment type="function">
    <text evidence="1">Catalyzes the attachment of proline to tRNA(Pro) in a two-step reaction: proline is first activated by ATP to form Pro-AMP and then transferred to the acceptor end of tRNA(Pro). As ProRS can inadvertently accommodate and process non-cognate amino acids such as alanine and cysteine, to avoid such errors it has two additional distinct editing activities against alanine. One activity is designated as 'pretransfer' editing and involves the tRNA(Pro)-independent hydrolysis of activated Ala-AMP. The other activity is designated 'posttransfer' editing and involves deacylation of mischarged Ala-tRNA(Pro). The misacylated Cys-tRNA(Pro) is not edited by ProRS.</text>
</comment>
<comment type="catalytic activity">
    <reaction evidence="1">
        <text>tRNA(Pro) + L-proline + ATP = L-prolyl-tRNA(Pro) + AMP + diphosphate</text>
        <dbReference type="Rhea" id="RHEA:14305"/>
        <dbReference type="Rhea" id="RHEA-COMP:9700"/>
        <dbReference type="Rhea" id="RHEA-COMP:9702"/>
        <dbReference type="ChEBI" id="CHEBI:30616"/>
        <dbReference type="ChEBI" id="CHEBI:33019"/>
        <dbReference type="ChEBI" id="CHEBI:60039"/>
        <dbReference type="ChEBI" id="CHEBI:78442"/>
        <dbReference type="ChEBI" id="CHEBI:78532"/>
        <dbReference type="ChEBI" id="CHEBI:456215"/>
        <dbReference type="EC" id="6.1.1.15"/>
    </reaction>
</comment>
<comment type="subunit">
    <text evidence="1">Homodimer.</text>
</comment>
<comment type="subcellular location">
    <subcellularLocation>
        <location evidence="1">Cytoplasm</location>
    </subcellularLocation>
</comment>
<comment type="domain">
    <text evidence="1">Consists of three domains: the N-terminal catalytic domain, the editing domain and the C-terminal anticodon-binding domain.</text>
</comment>
<comment type="similarity">
    <text evidence="1">Belongs to the class-II aminoacyl-tRNA synthetase family. ProS type 1 subfamily.</text>
</comment>
<sequence length="564" mass="64461">MRFSQLYAPTLRENPADAEIPSQALLQRAGFIRKIAAGVYTYLPLARRTLLKIENIVREEMDRIGAQEILMPIIQPAELWIKSGRWDDYGPEMMKLKDRHNRDFTLGPTHEELVTELVKNELNSYKQLPVTLYQIANKYRDEIRPRFGVLRAREFIMKDAYSFHDSWESLDEVYKKFKEAYSRILERIGLRYTVIEASSGAIGGKESHEFVAFAEYGESNILYCDCGYAGSDEKVPYMGEYEVFDEDEKERELVHTPNVRTVEEVAQYLGVEIKRIVKSLIFKGRDGYVMVLVPGNRELNFEKLKAYLGDQSLQMALPENILEDFGVPIGFLGPVGISNVKIVADKGIKYMKNFVVGGMKKNYHYINVNLERDFQVEEWADLVVVNPGEPCPVCGKPLKSERGIELGHIFKLGTKYSETMDVKYMNKDGKMKPFIMGCYGWGISRTLGAIVEQLHDDNGIIWPVSVAPYEVVITVVGKENEKSFAEKLYRYLLDKGVDVLIDDRDVSPGVKFKDADLIGFPLRITIGKSYKDGKVELKERVGNVTIIEADEEVILKNVQHILKR</sequence>
<keyword id="KW-0030">Aminoacyl-tRNA synthetase</keyword>
<keyword id="KW-0067">ATP-binding</keyword>
<keyword id="KW-0963">Cytoplasm</keyword>
<keyword id="KW-0436">Ligase</keyword>
<keyword id="KW-0547">Nucleotide-binding</keyword>
<keyword id="KW-0648">Protein biosynthesis</keyword>
<feature type="chain" id="PRO_1000069170" description="Proline--tRNA ligase">
    <location>
        <begin position="1"/>
        <end position="564"/>
    </location>
</feature>
<gene>
    <name evidence="1" type="primary">proS</name>
    <name type="ordered locus">Tmel_0063</name>
</gene>
<accession>A6LJ40</accession>
<reference key="1">
    <citation type="submission" date="2007-05" db="EMBL/GenBank/DDBJ databases">
        <title>Complete sequence of Thermosipho melanesiensis BI429.</title>
        <authorList>
            <consortium name="US DOE Joint Genome Institute"/>
            <person name="Copeland A."/>
            <person name="Lucas S."/>
            <person name="Lapidus A."/>
            <person name="Barry K."/>
            <person name="Glavina del Rio T."/>
            <person name="Dalin E."/>
            <person name="Tice H."/>
            <person name="Pitluck S."/>
            <person name="Chertkov O."/>
            <person name="Brettin T."/>
            <person name="Bruce D."/>
            <person name="Detter J.C."/>
            <person name="Han C."/>
            <person name="Schmutz J."/>
            <person name="Larimer F."/>
            <person name="Land M."/>
            <person name="Hauser L."/>
            <person name="Kyrpides N."/>
            <person name="Mikhailova N."/>
            <person name="Nelson K."/>
            <person name="Gogarten J.P."/>
            <person name="Noll K."/>
            <person name="Richardson P."/>
        </authorList>
    </citation>
    <scope>NUCLEOTIDE SEQUENCE [LARGE SCALE GENOMIC DNA]</scope>
    <source>
        <strain>DSM 12029 / CIP 104789 / BI429</strain>
    </source>
</reference>
<dbReference type="EC" id="6.1.1.15" evidence="1"/>
<dbReference type="EMBL" id="CP000716">
    <property type="protein sequence ID" value="ABR29941.1"/>
    <property type="molecule type" value="Genomic_DNA"/>
</dbReference>
<dbReference type="RefSeq" id="WP_012056303.1">
    <property type="nucleotide sequence ID" value="NC_009616.1"/>
</dbReference>
<dbReference type="SMR" id="A6LJ40"/>
<dbReference type="STRING" id="391009.Tmel_0063"/>
<dbReference type="KEGG" id="tme:Tmel_0063"/>
<dbReference type="eggNOG" id="COG0442">
    <property type="taxonomic scope" value="Bacteria"/>
</dbReference>
<dbReference type="HOGENOM" id="CLU_016739_0_0_0"/>
<dbReference type="OrthoDB" id="9809052at2"/>
<dbReference type="Proteomes" id="UP000001110">
    <property type="component" value="Chromosome"/>
</dbReference>
<dbReference type="GO" id="GO:0005829">
    <property type="term" value="C:cytosol"/>
    <property type="evidence" value="ECO:0007669"/>
    <property type="project" value="TreeGrafter"/>
</dbReference>
<dbReference type="GO" id="GO:0002161">
    <property type="term" value="F:aminoacyl-tRNA deacylase activity"/>
    <property type="evidence" value="ECO:0007669"/>
    <property type="project" value="InterPro"/>
</dbReference>
<dbReference type="GO" id="GO:0005524">
    <property type="term" value="F:ATP binding"/>
    <property type="evidence" value="ECO:0007669"/>
    <property type="project" value="UniProtKB-UniRule"/>
</dbReference>
<dbReference type="GO" id="GO:0004827">
    <property type="term" value="F:proline-tRNA ligase activity"/>
    <property type="evidence" value="ECO:0007669"/>
    <property type="project" value="UniProtKB-UniRule"/>
</dbReference>
<dbReference type="GO" id="GO:0006433">
    <property type="term" value="P:prolyl-tRNA aminoacylation"/>
    <property type="evidence" value="ECO:0007669"/>
    <property type="project" value="UniProtKB-UniRule"/>
</dbReference>
<dbReference type="CDD" id="cd04334">
    <property type="entry name" value="ProRS-INS"/>
    <property type="match status" value="1"/>
</dbReference>
<dbReference type="CDD" id="cd00861">
    <property type="entry name" value="ProRS_anticodon_short"/>
    <property type="match status" value="1"/>
</dbReference>
<dbReference type="CDD" id="cd00779">
    <property type="entry name" value="ProRS_core_prok"/>
    <property type="match status" value="1"/>
</dbReference>
<dbReference type="FunFam" id="3.30.930.10:FF:000065">
    <property type="entry name" value="Proline--tRNA ligase"/>
    <property type="match status" value="1"/>
</dbReference>
<dbReference type="FunFam" id="3.30.930.10:FF:000167">
    <property type="entry name" value="Proline--tRNA ligase"/>
    <property type="match status" value="1"/>
</dbReference>
<dbReference type="Gene3D" id="3.40.50.800">
    <property type="entry name" value="Anticodon-binding domain"/>
    <property type="match status" value="1"/>
</dbReference>
<dbReference type="Gene3D" id="3.30.930.10">
    <property type="entry name" value="Bira Bifunctional Protein, Domain 2"/>
    <property type="match status" value="2"/>
</dbReference>
<dbReference type="HAMAP" id="MF_01569">
    <property type="entry name" value="Pro_tRNA_synth_type1"/>
    <property type="match status" value="1"/>
</dbReference>
<dbReference type="InterPro" id="IPR002314">
    <property type="entry name" value="aa-tRNA-synt_IIb"/>
</dbReference>
<dbReference type="InterPro" id="IPR006195">
    <property type="entry name" value="aa-tRNA-synth_II"/>
</dbReference>
<dbReference type="InterPro" id="IPR045864">
    <property type="entry name" value="aa-tRNA-synth_II/BPL/LPL"/>
</dbReference>
<dbReference type="InterPro" id="IPR004154">
    <property type="entry name" value="Anticodon-bd"/>
</dbReference>
<dbReference type="InterPro" id="IPR036621">
    <property type="entry name" value="Anticodon-bd_dom_sf"/>
</dbReference>
<dbReference type="InterPro" id="IPR002316">
    <property type="entry name" value="Pro-tRNA-ligase_IIa"/>
</dbReference>
<dbReference type="InterPro" id="IPR004500">
    <property type="entry name" value="Pro-tRNA-synth_IIa_bac-type"/>
</dbReference>
<dbReference type="InterPro" id="IPR023717">
    <property type="entry name" value="Pro-tRNA-Synthase_IIa_type1"/>
</dbReference>
<dbReference type="InterPro" id="IPR050062">
    <property type="entry name" value="Pro-tRNA_synthetase"/>
</dbReference>
<dbReference type="InterPro" id="IPR044140">
    <property type="entry name" value="ProRS_anticodon_short"/>
</dbReference>
<dbReference type="InterPro" id="IPR033730">
    <property type="entry name" value="ProRS_core_prok"/>
</dbReference>
<dbReference type="InterPro" id="IPR036754">
    <property type="entry name" value="YbaK/aa-tRNA-synt-asso_dom_sf"/>
</dbReference>
<dbReference type="InterPro" id="IPR007214">
    <property type="entry name" value="YbaK/aa-tRNA-synth-assoc-dom"/>
</dbReference>
<dbReference type="NCBIfam" id="NF006625">
    <property type="entry name" value="PRK09194.1"/>
    <property type="match status" value="1"/>
</dbReference>
<dbReference type="NCBIfam" id="TIGR00409">
    <property type="entry name" value="proS_fam_II"/>
    <property type="match status" value="1"/>
</dbReference>
<dbReference type="PANTHER" id="PTHR42753">
    <property type="entry name" value="MITOCHONDRIAL RIBOSOME PROTEIN L39/PROLYL-TRNA LIGASE FAMILY MEMBER"/>
    <property type="match status" value="1"/>
</dbReference>
<dbReference type="PANTHER" id="PTHR42753:SF2">
    <property type="entry name" value="PROLINE--TRNA LIGASE"/>
    <property type="match status" value="1"/>
</dbReference>
<dbReference type="Pfam" id="PF03129">
    <property type="entry name" value="HGTP_anticodon"/>
    <property type="match status" value="1"/>
</dbReference>
<dbReference type="Pfam" id="PF00587">
    <property type="entry name" value="tRNA-synt_2b"/>
    <property type="match status" value="1"/>
</dbReference>
<dbReference type="Pfam" id="PF04073">
    <property type="entry name" value="tRNA_edit"/>
    <property type="match status" value="1"/>
</dbReference>
<dbReference type="PRINTS" id="PR01046">
    <property type="entry name" value="TRNASYNTHPRO"/>
</dbReference>
<dbReference type="SUPFAM" id="SSF52954">
    <property type="entry name" value="Class II aaRS ABD-related"/>
    <property type="match status" value="1"/>
</dbReference>
<dbReference type="SUPFAM" id="SSF55681">
    <property type="entry name" value="Class II aaRS and biotin synthetases"/>
    <property type="match status" value="1"/>
</dbReference>
<dbReference type="SUPFAM" id="SSF55826">
    <property type="entry name" value="YbaK/ProRS associated domain"/>
    <property type="match status" value="1"/>
</dbReference>
<dbReference type="PROSITE" id="PS50862">
    <property type="entry name" value="AA_TRNA_LIGASE_II"/>
    <property type="match status" value="1"/>
</dbReference>
<name>SYP_THEM4</name>
<organism>
    <name type="scientific">Thermosipho melanesiensis (strain DSM 12029 / CIP 104789 / BI429)</name>
    <dbReference type="NCBI Taxonomy" id="391009"/>
    <lineage>
        <taxon>Bacteria</taxon>
        <taxon>Thermotogati</taxon>
        <taxon>Thermotogota</taxon>
        <taxon>Thermotogae</taxon>
        <taxon>Thermotogales</taxon>
        <taxon>Fervidobacteriaceae</taxon>
        <taxon>Thermosipho</taxon>
    </lineage>
</organism>
<protein>
    <recommendedName>
        <fullName evidence="1">Proline--tRNA ligase</fullName>
        <ecNumber evidence="1">6.1.1.15</ecNumber>
    </recommendedName>
    <alternativeName>
        <fullName evidence="1">Prolyl-tRNA synthetase</fullName>
        <shortName evidence="1">ProRS</shortName>
    </alternativeName>
</protein>
<evidence type="ECO:0000255" key="1">
    <source>
        <dbReference type="HAMAP-Rule" id="MF_01569"/>
    </source>
</evidence>